<reference key="1">
    <citation type="journal article" date="1994" name="Virology">
        <title>Nucleotide sequence analysis of a 21-kbp region of the genome of human herpesvirus-6 containing homologues of human cytomegalovirus major immediate-early and replication genes.</title>
        <authorList>
            <person name="Nicholas J."/>
        </authorList>
    </citation>
    <scope>NUCLEOTIDE SEQUENCE [GENOMIC DNA]</scope>
</reference>
<reference key="2">
    <citation type="journal article" date="1995" name="Virology">
        <title>The DNA sequence of human herpesvirus-6: structure, coding content, and genome evolution.</title>
        <authorList>
            <person name="Gompels U.A."/>
            <person name="Nicholas J."/>
            <person name="Lawrence G.L."/>
            <person name="Jones M."/>
            <person name="Thomson B.J."/>
            <person name="Martin M.E.D."/>
            <person name="Efstathiou S."/>
            <person name="Craxton M.A."/>
            <person name="Macaulay H.A."/>
        </authorList>
    </citation>
    <scope>NUCLEOTIDE SEQUENCE [LARGE SCALE GENOMIC DNA]</scope>
</reference>
<reference key="3">
    <citation type="journal article" date="1993" name="J. Gen. Virol.">
        <title>Identification and expression of the human herpesvirus 6 glycoprotein H and interaction with an accessory 40K glycoprotein.</title>
        <authorList>
            <person name="Liu D.X."/>
            <person name="Gompels U.A."/>
            <person name="Nicholas J."/>
            <person name="Lelliott C."/>
        </authorList>
    </citation>
    <scope>INTERACTION WITH GLYCOPROTEIN H</scope>
    <scope>SUBCELLULAR LOCATION</scope>
</reference>
<gene>
    <name evidence="2" type="primary">gL</name>
    <name type="synonym">EDLF3</name>
    <name type="synonym">U82</name>
</gene>
<protein>
    <recommendedName>
        <fullName evidence="2">Envelope glycoprotein L</fullName>
        <shortName evidence="2">gL</shortName>
    </recommendedName>
</protein>
<organism>
    <name type="scientific">Human herpesvirus 6A (strain Uganda-1102)</name>
    <name type="common">HHV-6 variant A</name>
    <name type="synonym">Human B lymphotropic virus</name>
    <dbReference type="NCBI Taxonomy" id="10370"/>
    <lineage>
        <taxon>Viruses</taxon>
        <taxon>Duplodnaviria</taxon>
        <taxon>Heunggongvirae</taxon>
        <taxon>Peploviricota</taxon>
        <taxon>Herviviricetes</taxon>
        <taxon>Herpesvirales</taxon>
        <taxon>Orthoherpesviridae</taxon>
        <taxon>Betaherpesvirinae</taxon>
        <taxon>Roseolovirus</taxon>
        <taxon>Roseolovirus humanbeta6a</taxon>
        <taxon>Human betaherpesvirus 6A</taxon>
    </lineage>
</organism>
<sequence>MELLLFVMSLILLTFSKAIPLFNHNSFYFEKLDDCIAAVINCTKSEVPLLLEPIYQPPAYNEDVMSILLQPPTKKKPFSRIMVTDEFLSDFLLLQDNPEQLRTLFALIRDPESRDNWLNFFNGFQTCSPSVGITTCIRDNCRKYSPEKITYVNNFFVDNIAGLEFNISENTDSFYSNIGFLLYLENPAKGVTKIIRFPFNSLTLFDTILNCLKYFHLKTGVELDLLKHMETYNSKLPFRSSRPTILIRNT</sequence>
<feature type="signal peptide" evidence="2">
    <location>
        <begin position="1"/>
        <end position="18"/>
    </location>
</feature>
<feature type="chain" id="PRO_0000038268" description="Envelope glycoprotein L" evidence="2">
    <location>
        <begin position="19"/>
        <end position="250"/>
    </location>
</feature>
<feature type="domain" description="gL betaherpesvirus-type" evidence="3">
    <location>
        <begin position="31"/>
        <end position="239"/>
    </location>
</feature>
<feature type="disulfide bond" description="Interchain" evidence="3">
    <location>
        <position position="35"/>
    </location>
</feature>
<feature type="disulfide bond" description="Interchain" evidence="3">
    <location>
        <position position="42"/>
    </location>
</feature>
<feature type="disulfide bond" description="Interchain" evidence="3">
    <location>
        <position position="127"/>
    </location>
</feature>
<feature type="disulfide bond" evidence="3">
    <location>
        <begin position="136"/>
        <end position="141"/>
    </location>
</feature>
<name>GL_HHV6U</name>
<proteinExistence type="evidence at protein level"/>
<dbReference type="EMBL" id="U13194">
    <property type="protein sequence ID" value="AAA68473.1"/>
    <property type="molecule type" value="Genomic_DNA"/>
</dbReference>
<dbReference type="EMBL" id="X83413">
    <property type="protein sequence ID" value="CAA58331.1"/>
    <property type="molecule type" value="Genomic_DNA"/>
</dbReference>
<dbReference type="PIR" id="JQ2165">
    <property type="entry name" value="JQ2165"/>
</dbReference>
<dbReference type="RefSeq" id="NP_042975.1">
    <property type="nucleotide sequence ID" value="NC_001664.2"/>
</dbReference>
<dbReference type="SMR" id="P52508"/>
<dbReference type="DNASU" id="1487962"/>
<dbReference type="GeneID" id="1487962"/>
<dbReference type="KEGG" id="vg:1487962"/>
<dbReference type="Proteomes" id="UP000009295">
    <property type="component" value="Segment"/>
</dbReference>
<dbReference type="GO" id="GO:0044177">
    <property type="term" value="C:host cell Golgi apparatus"/>
    <property type="evidence" value="ECO:0007669"/>
    <property type="project" value="UniProtKB-SubCell"/>
</dbReference>
<dbReference type="GO" id="GO:0020002">
    <property type="term" value="C:host cell plasma membrane"/>
    <property type="evidence" value="ECO:0007669"/>
    <property type="project" value="UniProtKB-SubCell"/>
</dbReference>
<dbReference type="GO" id="GO:0016020">
    <property type="term" value="C:membrane"/>
    <property type="evidence" value="ECO:0007669"/>
    <property type="project" value="UniProtKB-KW"/>
</dbReference>
<dbReference type="GO" id="GO:0019031">
    <property type="term" value="C:viral envelope"/>
    <property type="evidence" value="ECO:0007669"/>
    <property type="project" value="UniProtKB-UniRule"/>
</dbReference>
<dbReference type="GO" id="GO:0055036">
    <property type="term" value="C:virion membrane"/>
    <property type="evidence" value="ECO:0007669"/>
    <property type="project" value="UniProtKB-SubCell"/>
</dbReference>
<dbReference type="GO" id="GO:0019064">
    <property type="term" value="P:fusion of virus membrane with host plasma membrane"/>
    <property type="evidence" value="ECO:0007669"/>
    <property type="project" value="UniProtKB-UniRule"/>
</dbReference>
<dbReference type="GO" id="GO:0046718">
    <property type="term" value="P:symbiont entry into host cell"/>
    <property type="evidence" value="ECO:0007669"/>
    <property type="project" value="UniProtKB-KW"/>
</dbReference>
<dbReference type="HAMAP" id="MF_04036">
    <property type="entry name" value="HSV_GL_betahv"/>
    <property type="match status" value="1"/>
</dbReference>
<dbReference type="InterPro" id="IPR002689">
    <property type="entry name" value="Cytomegalo_gL"/>
</dbReference>
<dbReference type="Pfam" id="PF01801">
    <property type="entry name" value="Cytomega_gL"/>
    <property type="match status" value="1"/>
</dbReference>
<dbReference type="PROSITE" id="PS52025">
    <property type="entry name" value="GL_BHV"/>
    <property type="match status" value="1"/>
</dbReference>
<organismHost>
    <name type="scientific">Homo sapiens</name>
    <name type="common">Human</name>
    <dbReference type="NCBI Taxonomy" id="9606"/>
</organismHost>
<accession>P52508</accession>
<evidence type="ECO:0000250" key="1">
    <source>
        <dbReference type="UniProtKB" id="P52526"/>
    </source>
</evidence>
<evidence type="ECO:0000255" key="2">
    <source>
        <dbReference type="HAMAP-Rule" id="MF_04036"/>
    </source>
</evidence>
<evidence type="ECO:0000255" key="3">
    <source>
        <dbReference type="PROSITE-ProRule" id="PRU01369"/>
    </source>
</evidence>
<evidence type="ECO:0000269" key="4">
    <source>
    </source>
</evidence>
<keyword id="KW-1015">Disulfide bond</keyword>
<keyword id="KW-1169">Fusion of virus membrane with host cell membrane</keyword>
<keyword id="KW-1168">Fusion of virus membrane with host membrane</keyword>
<keyword id="KW-0325">Glycoprotein</keyword>
<keyword id="KW-1032">Host cell membrane</keyword>
<keyword id="KW-1040">Host Golgi apparatus</keyword>
<keyword id="KW-1043">Host membrane</keyword>
<keyword id="KW-0472">Membrane</keyword>
<keyword id="KW-1185">Reference proteome</keyword>
<keyword id="KW-0732">Signal</keyword>
<keyword id="KW-0261">Viral envelope protein</keyword>
<keyword id="KW-1162">Viral penetration into host cytoplasm</keyword>
<keyword id="KW-0946">Virion</keyword>
<keyword id="KW-1160">Virus entry into host cell</keyword>
<comment type="function">
    <text evidence="2">The heterodimer glycoprotein H-glycoprotein L is required for the fusion of viral and plasma membranes leading to virus entry into the host cell. Acts as a functional inhibitor of gH and maintains gH in an inhibited form. Upon binding to host integrins, gL dissociates from gH leading to activation of the viral fusion glycoproteins gB and gH.</text>
</comment>
<comment type="subunit">
    <text evidence="1 2">Interacts with glycoprotein H (gH); this interaction is necessary for the correct processing and cell surface expression of gH (By similarity). Part of a gH-gL-gO complex (By similarity).</text>
</comment>
<comment type="subcellular location">
    <subcellularLocation>
        <location evidence="2">Virion membrane</location>
        <topology evidence="2">Peripheral membrane protein</topology>
        <orientation evidence="2">Extracellular side</orientation>
    </subcellularLocation>
    <subcellularLocation>
        <location evidence="2">Host cell membrane</location>
        <topology evidence="2">Peripheral membrane protein</topology>
        <orientation evidence="2">Extracellular side</orientation>
    </subcellularLocation>
    <subcellularLocation>
        <location evidence="2">Host Golgi apparatus</location>
        <location evidence="2">Host trans-Golgi network</location>
    </subcellularLocation>
    <text evidence="2 4">gL associates with the extravirion surface through its binding to gH. During virion morphogenesis, this protein probably accumulates in the host trans-Golgi where secondary envelopment occurs. Found in Golgi-like bodies of fibroblasts. In T-lymphocytes, found in the endoplasmic reticulum.</text>
</comment>
<comment type="similarity">
    <text evidence="3">Belongs to the herpesviridae glycoprotein L (gL) family. Betaherpesvirinae gL subfamily.</text>
</comment>